<proteinExistence type="evidence at protein level"/>
<comment type="function">
    <text evidence="2">Hydrolyzes various disaccharides such as sucrose, maltose, and isomaltose with different efficiencies. Also hydrolyzes longer maltodextrins from maltotriose up to maltohexaose, but not maltoheptaose, palatinose, isomaltotriose, or isomaltotetraose.</text>
</comment>
<comment type="catalytic activity">
    <reaction evidence="2 3 4">
        <text>Hydrolysis of (1-&gt;6)-alpha-D-glucosidic linkages in some oligosaccharides produced from starch and glycogen by alpha-amylase, and in isomaltose.</text>
        <dbReference type="EC" id="3.2.1.10"/>
    </reaction>
</comment>
<comment type="biophysicochemical properties">
    <temperatureDependence>
        <text evidence="2">Optimum temperature is 42 degrees Celsius.</text>
    </temperatureDependence>
</comment>
<comment type="subcellular location">
    <subcellularLocation>
        <location>Cytoplasm</location>
    </subcellularLocation>
</comment>
<comment type="similarity">
    <text evidence="5">Belongs to the glycosyl hydrolase 13 family.</text>
</comment>
<organism>
    <name type="scientific">Bacillus subtilis (strain 168)</name>
    <dbReference type="NCBI Taxonomy" id="224308"/>
    <lineage>
        <taxon>Bacteria</taxon>
        <taxon>Bacillati</taxon>
        <taxon>Bacillota</taxon>
        <taxon>Bacilli</taxon>
        <taxon>Bacillales</taxon>
        <taxon>Bacillaceae</taxon>
        <taxon>Bacillus</taxon>
    </lineage>
</organism>
<keyword id="KW-0002">3D-structure</keyword>
<keyword id="KW-0106">Calcium</keyword>
<keyword id="KW-0963">Cytoplasm</keyword>
<keyword id="KW-0326">Glycosidase</keyword>
<keyword id="KW-0378">Hydrolase</keyword>
<keyword id="KW-0479">Metal-binding</keyword>
<keyword id="KW-1185">Reference proteome</keyword>
<dbReference type="EC" id="3.2.1.10" evidence="2 3 4"/>
<dbReference type="EMBL" id="Z94043">
    <property type="protein sequence ID" value="CAB08041.1"/>
    <property type="molecule type" value="Genomic_DNA"/>
</dbReference>
<dbReference type="EMBL" id="AL009126">
    <property type="protein sequence ID" value="CAB15461.1"/>
    <property type="molecule type" value="Genomic_DNA"/>
</dbReference>
<dbReference type="PIR" id="D70034">
    <property type="entry name" value="D70034"/>
</dbReference>
<dbReference type="RefSeq" id="WP_003243333.1">
    <property type="nucleotide sequence ID" value="NZ_OZ025638.1"/>
</dbReference>
<dbReference type="PDB" id="4M56">
    <property type="method" value="X-ray"/>
    <property type="resolution" value="2.30 A"/>
    <property type="chains" value="A/B=1-561"/>
</dbReference>
<dbReference type="PDB" id="4M8U">
    <property type="method" value="X-ray"/>
    <property type="resolution" value="1.45 A"/>
    <property type="chains" value="A=1-561"/>
</dbReference>
<dbReference type="PDB" id="4MAZ">
    <property type="method" value="X-ray"/>
    <property type="resolution" value="1.60 A"/>
    <property type="chains" value="A=1-561"/>
</dbReference>
<dbReference type="PDB" id="4MB1">
    <property type="method" value="X-ray"/>
    <property type="resolution" value="1.40 A"/>
    <property type="chains" value="A=1-561"/>
</dbReference>
<dbReference type="PDB" id="5WCZ">
    <property type="method" value="X-ray"/>
    <property type="resolution" value="1.58 A"/>
    <property type="chains" value="A/B=1-561"/>
</dbReference>
<dbReference type="PDB" id="7LV6">
    <property type="method" value="X-ray"/>
    <property type="resolution" value="1.10 A"/>
    <property type="chains" value="B=3-561"/>
</dbReference>
<dbReference type="PDBsum" id="4M56"/>
<dbReference type="PDBsum" id="4M8U"/>
<dbReference type="PDBsum" id="4MAZ"/>
<dbReference type="PDBsum" id="4MB1"/>
<dbReference type="PDBsum" id="5WCZ"/>
<dbReference type="PDBsum" id="7LV6"/>
<dbReference type="SMR" id="O06994"/>
<dbReference type="FunCoup" id="O06994">
    <property type="interactions" value="151"/>
</dbReference>
<dbReference type="STRING" id="224308.BSU34560"/>
<dbReference type="CAZy" id="GH13">
    <property type="family name" value="Glycoside Hydrolase Family 13"/>
</dbReference>
<dbReference type="PaxDb" id="224308-BSU34560"/>
<dbReference type="EnsemblBacteria" id="CAB15461">
    <property type="protein sequence ID" value="CAB15461"/>
    <property type="gene ID" value="BSU_34560"/>
</dbReference>
<dbReference type="GeneID" id="938623"/>
<dbReference type="KEGG" id="bsu:BSU34560"/>
<dbReference type="PATRIC" id="fig|224308.179.peg.3743"/>
<dbReference type="eggNOG" id="COG0366">
    <property type="taxonomic scope" value="Bacteria"/>
</dbReference>
<dbReference type="InParanoid" id="O06994"/>
<dbReference type="OrthoDB" id="9805159at2"/>
<dbReference type="PhylomeDB" id="O06994"/>
<dbReference type="BioCyc" id="BSUB:BSU34560-MONOMER"/>
<dbReference type="EvolutionaryTrace" id="O06994"/>
<dbReference type="Proteomes" id="UP000001570">
    <property type="component" value="Chromosome"/>
</dbReference>
<dbReference type="GO" id="GO:0005737">
    <property type="term" value="C:cytoplasm"/>
    <property type="evidence" value="ECO:0007669"/>
    <property type="project" value="UniProtKB-SubCell"/>
</dbReference>
<dbReference type="GO" id="GO:0004556">
    <property type="term" value="F:alpha-amylase activity"/>
    <property type="evidence" value="ECO:0000318"/>
    <property type="project" value="GO_Central"/>
</dbReference>
<dbReference type="GO" id="GO:0046872">
    <property type="term" value="F:metal ion binding"/>
    <property type="evidence" value="ECO:0007669"/>
    <property type="project" value="UniProtKB-KW"/>
</dbReference>
<dbReference type="GO" id="GO:0004574">
    <property type="term" value="F:oligo-1,6-glucosidase activity"/>
    <property type="evidence" value="ECO:0007669"/>
    <property type="project" value="UniProtKB-EC"/>
</dbReference>
<dbReference type="GO" id="GO:0009313">
    <property type="term" value="P:oligosaccharide catabolic process"/>
    <property type="evidence" value="ECO:0000318"/>
    <property type="project" value="GO_Central"/>
</dbReference>
<dbReference type="CDD" id="cd11333">
    <property type="entry name" value="AmyAc_SI_OligoGlu_DGase"/>
    <property type="match status" value="1"/>
</dbReference>
<dbReference type="FunFam" id="3.20.20.80:FF:000014">
    <property type="entry name" value="Alpha,alpha-phosphotrehalase"/>
    <property type="match status" value="1"/>
</dbReference>
<dbReference type="FunFam" id="3.20.20.80:FF:000064">
    <property type="entry name" value="Oligo-1,6-glucosidase"/>
    <property type="match status" value="1"/>
</dbReference>
<dbReference type="FunFam" id="2.60.40.1180:FF:000007">
    <property type="entry name" value="Sucrose isomerase"/>
    <property type="match status" value="1"/>
</dbReference>
<dbReference type="FunFam" id="3.90.400.10:FF:000002">
    <property type="entry name" value="Sucrose isomerase"/>
    <property type="match status" value="1"/>
</dbReference>
<dbReference type="Gene3D" id="3.20.20.80">
    <property type="entry name" value="Glycosidases"/>
    <property type="match status" value="1"/>
</dbReference>
<dbReference type="Gene3D" id="2.60.40.1180">
    <property type="entry name" value="Golgi alpha-mannosidase II"/>
    <property type="match status" value="1"/>
</dbReference>
<dbReference type="Gene3D" id="3.90.400.10">
    <property type="entry name" value="Oligo-1,6-glucosidase, Domain 2"/>
    <property type="match status" value="1"/>
</dbReference>
<dbReference type="InterPro" id="IPR006047">
    <property type="entry name" value="Glyco_hydro_13_cat_dom"/>
</dbReference>
<dbReference type="InterPro" id="IPR013780">
    <property type="entry name" value="Glyco_hydro_b"/>
</dbReference>
<dbReference type="InterPro" id="IPR017853">
    <property type="entry name" value="Glycoside_hydrolase_SF"/>
</dbReference>
<dbReference type="InterPro" id="IPR032091">
    <property type="entry name" value="Malt_amylase-like_C"/>
</dbReference>
<dbReference type="InterPro" id="IPR045857">
    <property type="entry name" value="O16G_dom_2"/>
</dbReference>
<dbReference type="NCBIfam" id="NF008183">
    <property type="entry name" value="PRK10933.1"/>
    <property type="match status" value="1"/>
</dbReference>
<dbReference type="PANTHER" id="PTHR10357">
    <property type="entry name" value="ALPHA-AMYLASE FAMILY MEMBER"/>
    <property type="match status" value="1"/>
</dbReference>
<dbReference type="PANTHER" id="PTHR10357:SF184">
    <property type="entry name" value="OLIGO-1,6-GLUCOSIDASE 1"/>
    <property type="match status" value="1"/>
</dbReference>
<dbReference type="Pfam" id="PF00128">
    <property type="entry name" value="Alpha-amylase"/>
    <property type="match status" value="1"/>
</dbReference>
<dbReference type="Pfam" id="PF16657">
    <property type="entry name" value="Malt_amylase_C"/>
    <property type="match status" value="1"/>
</dbReference>
<dbReference type="SMART" id="SM00642">
    <property type="entry name" value="Aamy"/>
    <property type="match status" value="1"/>
</dbReference>
<dbReference type="SUPFAM" id="SSF51445">
    <property type="entry name" value="(Trans)glycosidases"/>
    <property type="match status" value="1"/>
</dbReference>
<dbReference type="SUPFAM" id="SSF51011">
    <property type="entry name" value="Glycosyl hydrolase domain"/>
    <property type="match status" value="1"/>
</dbReference>
<evidence type="ECO:0000250" key="1"/>
<evidence type="ECO:0000269" key="2">
    <source>
    </source>
</evidence>
<evidence type="ECO:0000269" key="3">
    <source>
    </source>
</evidence>
<evidence type="ECO:0000269" key="4">
    <source>
    </source>
</evidence>
<evidence type="ECO:0000305" key="5"/>
<evidence type="ECO:0007744" key="6">
    <source>
        <dbReference type="PDB" id="4M56"/>
    </source>
</evidence>
<evidence type="ECO:0007744" key="7">
    <source>
        <dbReference type="PDB" id="4M8U"/>
    </source>
</evidence>
<evidence type="ECO:0007744" key="8">
    <source>
        <dbReference type="PDB" id="4MAZ"/>
    </source>
</evidence>
<evidence type="ECO:0007744" key="9">
    <source>
        <dbReference type="PDB" id="4MB1"/>
    </source>
</evidence>
<evidence type="ECO:0007829" key="10">
    <source>
        <dbReference type="PDB" id="4MB1"/>
    </source>
</evidence>
<evidence type="ECO:0007829" key="11">
    <source>
        <dbReference type="PDB" id="7LV6"/>
    </source>
</evidence>
<protein>
    <recommendedName>
        <fullName>Oligo-1,6-glucosidase 1</fullName>
        <ecNumber evidence="2 3 4">3.2.1.10</ecNumber>
    </recommendedName>
    <alternativeName>
        <fullName>Dextrin 6-alpha-D-glucanohydrolase</fullName>
    </alternativeName>
    <alternativeName>
        <fullName>Oligosaccharide alpha-1,6-glucosidase 1</fullName>
    </alternativeName>
    <alternativeName>
        <fullName>Sucrase-isomaltase 1</fullName>
        <shortName>Isomaltase 1</shortName>
    </alternativeName>
</protein>
<feature type="chain" id="PRO_0000054317" description="Oligo-1,6-glucosidase 1">
    <location>
        <begin position="1"/>
        <end position="561"/>
    </location>
</feature>
<feature type="active site" description="Nucleophile" evidence="1">
    <location>
        <position position="199"/>
    </location>
</feature>
<feature type="active site" description="Proton donor" evidence="1">
    <location>
        <position position="255"/>
    </location>
</feature>
<feature type="binding site" evidence="3 7 9">
    <location>
        <position position="20"/>
    </location>
    <ligand>
        <name>Ca(2+)</name>
        <dbReference type="ChEBI" id="CHEBI:29108"/>
    </ligand>
</feature>
<feature type="binding site" evidence="3 7 9">
    <location>
        <position position="22"/>
    </location>
    <ligand>
        <name>Ca(2+)</name>
        <dbReference type="ChEBI" id="CHEBI:29108"/>
    </ligand>
</feature>
<feature type="binding site" evidence="3 7 9">
    <location>
        <position position="24"/>
    </location>
    <ligand>
        <name>Ca(2+)</name>
        <dbReference type="ChEBI" id="CHEBI:29108"/>
    </ligand>
</feature>
<feature type="binding site" evidence="3 7 9">
    <location>
        <position position="26"/>
    </location>
    <ligand>
        <name>Ca(2+)</name>
        <dbReference type="ChEBI" id="CHEBI:29108"/>
    </ligand>
</feature>
<feature type="binding site" evidence="3 7 9">
    <location>
        <position position="28"/>
    </location>
    <ligand>
        <name>Ca(2+)</name>
        <dbReference type="ChEBI" id="CHEBI:29108"/>
    </ligand>
</feature>
<feature type="site" description="Transition state stabilizer" evidence="1">
    <location>
        <position position="332"/>
    </location>
</feature>
<feature type="helix" evidence="11">
    <location>
        <begin position="4"/>
        <end position="6"/>
    </location>
</feature>
<feature type="strand" evidence="11">
    <location>
        <begin position="10"/>
        <end position="13"/>
    </location>
</feature>
<feature type="helix" evidence="11">
    <location>
        <begin position="15"/>
        <end position="17"/>
    </location>
</feature>
<feature type="strand" evidence="11">
    <location>
        <begin position="21"/>
        <end position="26"/>
    </location>
</feature>
<feature type="helix" evidence="11">
    <location>
        <begin position="29"/>
        <end position="34"/>
    </location>
</feature>
<feature type="helix" evidence="11">
    <location>
        <begin position="36"/>
        <end position="42"/>
    </location>
</feature>
<feature type="strand" evidence="11">
    <location>
        <begin position="46"/>
        <end position="49"/>
    </location>
</feature>
<feature type="turn" evidence="11">
    <location>
        <begin position="58"/>
        <end position="61"/>
    </location>
</feature>
<feature type="strand" evidence="11">
    <location>
        <begin position="65"/>
        <end position="70"/>
    </location>
</feature>
<feature type="turn" evidence="11">
    <location>
        <begin position="72"/>
        <end position="74"/>
    </location>
</feature>
<feature type="helix" evidence="11">
    <location>
        <begin position="77"/>
        <end position="89"/>
    </location>
</feature>
<feature type="strand" evidence="11">
    <location>
        <begin position="93"/>
        <end position="98"/>
    </location>
</feature>
<feature type="helix" evidence="11">
    <location>
        <begin position="108"/>
        <end position="113"/>
    </location>
</feature>
<feature type="helix" evidence="11">
    <location>
        <begin position="122"/>
        <end position="124"/>
    </location>
</feature>
<feature type="strand" evidence="11">
    <location>
        <begin position="145"/>
        <end position="152"/>
    </location>
</feature>
<feature type="turn" evidence="11">
    <location>
        <begin position="153"/>
        <end position="156"/>
    </location>
</feature>
<feature type="strand" evidence="11">
    <location>
        <begin position="157"/>
        <end position="160"/>
    </location>
</feature>
<feature type="helix" evidence="11">
    <location>
        <begin position="175"/>
        <end position="190"/>
    </location>
</feature>
<feature type="strand" evidence="11">
    <location>
        <begin position="195"/>
        <end position="198"/>
    </location>
</feature>
<feature type="helix" evidence="11">
    <location>
        <begin position="201"/>
        <end position="203"/>
    </location>
</feature>
<feature type="strand" evidence="11">
    <location>
        <begin position="220"/>
        <end position="222"/>
    </location>
</feature>
<feature type="helix" evidence="11">
    <location>
        <begin position="225"/>
        <end position="227"/>
    </location>
</feature>
<feature type="helix" evidence="11">
    <location>
        <begin position="233"/>
        <end position="243"/>
    </location>
</feature>
<feature type="helix" evidence="11">
    <location>
        <begin position="245"/>
        <end position="247"/>
    </location>
</feature>
<feature type="strand" evidence="11">
    <location>
        <begin position="251"/>
        <end position="255"/>
    </location>
</feature>
<feature type="helix" evidence="11">
    <location>
        <begin position="261"/>
        <end position="268"/>
    </location>
</feature>
<feature type="helix" evidence="11">
    <location>
        <begin position="270"/>
        <end position="272"/>
    </location>
</feature>
<feature type="strand" evidence="11">
    <location>
        <begin position="276"/>
        <end position="279"/>
    </location>
</feature>
<feature type="helix" evidence="11">
    <location>
        <begin position="282"/>
        <end position="285"/>
    </location>
</feature>
<feature type="helix" evidence="11">
    <location>
        <begin position="295"/>
        <end position="297"/>
    </location>
</feature>
<feature type="helix" evidence="11">
    <location>
        <begin position="304"/>
        <end position="317"/>
    </location>
</feature>
<feature type="strand" evidence="11">
    <location>
        <begin position="319"/>
        <end position="322"/>
    </location>
</feature>
<feature type="strand" evidence="11">
    <location>
        <begin position="324"/>
        <end position="326"/>
    </location>
</feature>
<feature type="helix" evidence="11">
    <location>
        <begin position="336"/>
        <end position="340"/>
    </location>
</feature>
<feature type="helix" evidence="11">
    <location>
        <begin position="347"/>
        <end position="359"/>
    </location>
</feature>
<feature type="strand" evidence="11">
    <location>
        <begin position="361"/>
        <end position="368"/>
    </location>
</feature>
<feature type="helix" evidence="11">
    <location>
        <begin position="371"/>
        <end position="373"/>
    </location>
</feature>
<feature type="helix" evidence="11">
    <location>
        <begin position="382"/>
        <end position="384"/>
    </location>
</feature>
<feature type="helix" evidence="11">
    <location>
        <begin position="388"/>
        <end position="397"/>
    </location>
</feature>
<feature type="turn" evidence="11">
    <location>
        <begin position="398"/>
        <end position="400"/>
    </location>
</feature>
<feature type="helix" evidence="11">
    <location>
        <begin position="406"/>
        <end position="416"/>
    </location>
</feature>
<feature type="helix" evidence="11">
    <location>
        <begin position="418"/>
        <end position="421"/>
    </location>
</feature>
<feature type="strand" evidence="10">
    <location>
        <begin position="428"/>
        <end position="430"/>
    </location>
</feature>
<feature type="helix" evidence="11">
    <location>
        <begin position="431"/>
        <end position="434"/>
    </location>
</feature>
<feature type="turn" evidence="11">
    <location>
        <begin position="446"/>
        <end position="450"/>
    </location>
</feature>
<feature type="helix" evidence="11">
    <location>
        <begin position="453"/>
        <end position="458"/>
    </location>
</feature>
<feature type="helix" evidence="11">
    <location>
        <begin position="463"/>
        <end position="476"/>
    </location>
</feature>
<feature type="helix" evidence="11">
    <location>
        <begin position="478"/>
        <end position="482"/>
    </location>
</feature>
<feature type="strand" evidence="11">
    <location>
        <begin position="486"/>
        <end position="489"/>
    </location>
</feature>
<feature type="strand" evidence="11">
    <location>
        <begin position="493"/>
        <end position="502"/>
    </location>
</feature>
<feature type="strand" evidence="11">
    <location>
        <begin position="505"/>
        <end position="512"/>
    </location>
</feature>
<feature type="strand" evidence="11">
    <location>
        <begin position="514"/>
        <end position="516"/>
    </location>
</feature>
<feature type="strand" evidence="11">
    <location>
        <begin position="518"/>
        <end position="521"/>
    </location>
</feature>
<feature type="helix" evidence="11">
    <location>
        <begin position="524"/>
        <end position="526"/>
    </location>
</feature>
<feature type="strand" evidence="11">
    <location>
        <begin position="531"/>
        <end position="539"/>
    </location>
</feature>
<feature type="strand" evidence="11">
    <location>
        <begin position="547"/>
        <end position="550"/>
    </location>
</feature>
<feature type="strand" evidence="11">
    <location>
        <begin position="555"/>
        <end position="560"/>
    </location>
</feature>
<sequence length="561" mass="66081">MSEWWKEAVVYQIYPRSFYDANGDGFGDLQGVIQKLDYIKNLGADVIWLSPVFDSPQDDNGYDISDYKNMYEKFGTNEDMFQLIDEVHKRGMKIVMDLVVNHTSDEHAWFAESRKSKDNPYRDYYLWKDPKPDGSEPNNWGSIFSGSAWTYDEGTGQYYLHYFSKKQPDLNWENEAVRREVYDVMRFWMDRGVDGWRMDVIGSISKYTDFPDYETDHSRSYIVGRYHSNGPRLHEFIQEMNREVLSHYDCMTVGEANGSDIEEAKKYTDASRQELNMIFTFEHMDIDKEQNSPNGKWQIKPFDLIALKKTMTRWQTGLMNVGWNTLYFENHDQPRVISRWGNDRKLRKECAKAFATVLHGMKGTPFIYQGEEIGMVNSDMPLEMYDDLEIKNAYRELVVENKTMSEKEFVKAVMIKGRDHARTPMQWDAGKHAGFTAGDPWIPVNSRYQDINVKESLEDQDSIFFYYQKLIQLRKQYKIMIYGDYQLLQENDPQVFSYLREYRGEKLLVVVNLSEEKALFEAPPELIHERWKVLISNYPQERADLKSISLKPYEAVMGISI</sequence>
<name>O16G1_BACSU</name>
<reference key="1">
    <citation type="submission" date="1997-04" db="EMBL/GenBank/DDBJ databases">
        <authorList>
            <person name="Denizot F."/>
        </authorList>
    </citation>
    <scope>NUCLEOTIDE SEQUENCE [GENOMIC DNA]</scope>
    <source>
        <strain>168</strain>
    </source>
</reference>
<reference key="2">
    <citation type="journal article" date="1997" name="Nature">
        <title>The complete genome sequence of the Gram-positive bacterium Bacillus subtilis.</title>
        <authorList>
            <person name="Kunst F."/>
            <person name="Ogasawara N."/>
            <person name="Moszer I."/>
            <person name="Albertini A.M."/>
            <person name="Alloni G."/>
            <person name="Azevedo V."/>
            <person name="Bertero M.G."/>
            <person name="Bessieres P."/>
            <person name="Bolotin A."/>
            <person name="Borchert S."/>
            <person name="Borriss R."/>
            <person name="Boursier L."/>
            <person name="Brans A."/>
            <person name="Braun M."/>
            <person name="Brignell S.C."/>
            <person name="Bron S."/>
            <person name="Brouillet S."/>
            <person name="Bruschi C.V."/>
            <person name="Caldwell B."/>
            <person name="Capuano V."/>
            <person name="Carter N.M."/>
            <person name="Choi S.-K."/>
            <person name="Codani J.-J."/>
            <person name="Connerton I.F."/>
            <person name="Cummings N.J."/>
            <person name="Daniel R.A."/>
            <person name="Denizot F."/>
            <person name="Devine K.M."/>
            <person name="Duesterhoeft A."/>
            <person name="Ehrlich S.D."/>
            <person name="Emmerson P.T."/>
            <person name="Entian K.-D."/>
            <person name="Errington J."/>
            <person name="Fabret C."/>
            <person name="Ferrari E."/>
            <person name="Foulger D."/>
            <person name="Fritz C."/>
            <person name="Fujita M."/>
            <person name="Fujita Y."/>
            <person name="Fuma S."/>
            <person name="Galizzi A."/>
            <person name="Galleron N."/>
            <person name="Ghim S.-Y."/>
            <person name="Glaser P."/>
            <person name="Goffeau A."/>
            <person name="Golightly E.J."/>
            <person name="Grandi G."/>
            <person name="Guiseppi G."/>
            <person name="Guy B.J."/>
            <person name="Haga K."/>
            <person name="Haiech J."/>
            <person name="Harwood C.R."/>
            <person name="Henaut A."/>
            <person name="Hilbert H."/>
            <person name="Holsappel S."/>
            <person name="Hosono S."/>
            <person name="Hullo M.-F."/>
            <person name="Itaya M."/>
            <person name="Jones L.-M."/>
            <person name="Joris B."/>
            <person name="Karamata D."/>
            <person name="Kasahara Y."/>
            <person name="Klaerr-Blanchard M."/>
            <person name="Klein C."/>
            <person name="Kobayashi Y."/>
            <person name="Koetter P."/>
            <person name="Koningstein G."/>
            <person name="Krogh S."/>
            <person name="Kumano M."/>
            <person name="Kurita K."/>
            <person name="Lapidus A."/>
            <person name="Lardinois S."/>
            <person name="Lauber J."/>
            <person name="Lazarevic V."/>
            <person name="Lee S.-M."/>
            <person name="Levine A."/>
            <person name="Liu H."/>
            <person name="Masuda S."/>
            <person name="Mauel C."/>
            <person name="Medigue C."/>
            <person name="Medina N."/>
            <person name="Mellado R.P."/>
            <person name="Mizuno M."/>
            <person name="Moestl D."/>
            <person name="Nakai S."/>
            <person name="Noback M."/>
            <person name="Noone D."/>
            <person name="O'Reilly M."/>
            <person name="Ogawa K."/>
            <person name="Ogiwara A."/>
            <person name="Oudega B."/>
            <person name="Park S.-H."/>
            <person name="Parro V."/>
            <person name="Pohl T.M."/>
            <person name="Portetelle D."/>
            <person name="Porwollik S."/>
            <person name="Prescott A.M."/>
            <person name="Presecan E."/>
            <person name="Pujic P."/>
            <person name="Purnelle B."/>
            <person name="Rapoport G."/>
            <person name="Rey M."/>
            <person name="Reynolds S."/>
            <person name="Rieger M."/>
            <person name="Rivolta C."/>
            <person name="Rocha E."/>
            <person name="Roche B."/>
            <person name="Rose M."/>
            <person name="Sadaie Y."/>
            <person name="Sato T."/>
            <person name="Scanlan E."/>
            <person name="Schleich S."/>
            <person name="Schroeter R."/>
            <person name="Scoffone F."/>
            <person name="Sekiguchi J."/>
            <person name="Sekowska A."/>
            <person name="Seror S.J."/>
            <person name="Serror P."/>
            <person name="Shin B.-S."/>
            <person name="Soldo B."/>
            <person name="Sorokin A."/>
            <person name="Tacconi E."/>
            <person name="Takagi T."/>
            <person name="Takahashi H."/>
            <person name="Takemaru K."/>
            <person name="Takeuchi M."/>
            <person name="Tamakoshi A."/>
            <person name="Tanaka T."/>
            <person name="Terpstra P."/>
            <person name="Tognoni A."/>
            <person name="Tosato V."/>
            <person name="Uchiyama S."/>
            <person name="Vandenbol M."/>
            <person name="Vannier F."/>
            <person name="Vassarotti A."/>
            <person name="Viari A."/>
            <person name="Wambutt R."/>
            <person name="Wedler E."/>
            <person name="Wedler H."/>
            <person name="Weitzenegger T."/>
            <person name="Winters P."/>
            <person name="Wipat A."/>
            <person name="Yamamoto H."/>
            <person name="Yamane K."/>
            <person name="Yasumoto K."/>
            <person name="Yata K."/>
            <person name="Yoshida K."/>
            <person name="Yoshikawa H.-F."/>
            <person name="Zumstein E."/>
            <person name="Yoshikawa H."/>
            <person name="Danchin A."/>
        </authorList>
    </citation>
    <scope>NUCLEOTIDE SEQUENCE [LARGE SCALE GENOMIC DNA]</scope>
    <source>
        <strain>168</strain>
    </source>
</reference>
<reference key="3">
    <citation type="journal article" date="1998" name="J. Bacteriol.">
        <title>Identification and enzymatic characterization of the maltose-inducible alpha-glucosidase MalL (sucrase-isomaltase-maltase) of Bacillus subtilis.</title>
        <authorList>
            <person name="Schoenert S."/>
            <person name="Buder T."/>
            <person name="Dahl M.K."/>
        </authorList>
    </citation>
    <scope>CHARACTERIZATION</scope>
    <scope>CATALYTIC ACTIVITY</scope>
</reference>
<reference key="4">
    <citation type="journal article" date="1999" name="Res. Microbiol.">
        <title>Properties of maltose-inducible alpha-glucosidase MalL (sucrase-isomaltase-maltase) in Bacillus subtilis: evidence for its contribution to maltodextrin utilization.</title>
        <authorList>
            <person name="Schoenert S."/>
            <person name="Buder T."/>
            <person name="Dahl M.K."/>
        </authorList>
    </citation>
    <scope>CHARACTERIZATION</scope>
    <scope>FUNCTION</scope>
    <scope>CATALYTIC ACTIVITY</scope>
    <scope>BIOPHYSICOCHEMICAL PROPERTIES</scope>
</reference>
<reference evidence="6 7 8 9" key="5">
    <citation type="journal article" date="2013" name="ACS Chem. Biol.">
        <title>Change in heat capacity for enzyme catalysis determines temperature dependence of enzyme catalyzed rates.</title>
        <authorList>
            <person name="Hobbs J.K."/>
            <person name="Jiao W."/>
            <person name="Easter A.D."/>
            <person name="Parker E.J."/>
            <person name="Schipper L.A."/>
            <person name="Arcus V.L."/>
        </authorList>
    </citation>
    <scope>X-RAY CRYSTALLOGRAPHY (1.40 ANGSTROMS) IN COMPLEX WITH CALCIUM</scope>
    <scope>CATALYTIC ACTIVITY</scope>
</reference>
<gene>
    <name type="primary">malL</name>
    <name type="synonym">yvdL</name>
    <name type="ordered locus">BSU34560</name>
</gene>
<accession>O06994</accession>